<feature type="chain" id="PRO_1000058633" description="Pantothenate kinase">
    <location>
        <begin position="1"/>
        <end position="316"/>
    </location>
</feature>
<feature type="binding site" evidence="1">
    <location>
        <begin position="95"/>
        <end position="102"/>
    </location>
    <ligand>
        <name>ATP</name>
        <dbReference type="ChEBI" id="CHEBI:30616"/>
    </ligand>
</feature>
<gene>
    <name evidence="1" type="primary">coaA</name>
    <name type="ordered locus">EcHS_A4208</name>
</gene>
<dbReference type="EC" id="2.7.1.33" evidence="1"/>
<dbReference type="EMBL" id="CP000802">
    <property type="protein sequence ID" value="ABV08382.1"/>
    <property type="molecule type" value="Genomic_DNA"/>
</dbReference>
<dbReference type="RefSeq" id="WP_000023081.1">
    <property type="nucleotide sequence ID" value="NC_009800.1"/>
</dbReference>
<dbReference type="SMR" id="A8A778"/>
<dbReference type="GeneID" id="93777919"/>
<dbReference type="KEGG" id="ecx:EcHS_A4208"/>
<dbReference type="HOGENOM" id="CLU_053818_1_1_6"/>
<dbReference type="UniPathway" id="UPA00241">
    <property type="reaction ID" value="UER00352"/>
</dbReference>
<dbReference type="GO" id="GO:0005737">
    <property type="term" value="C:cytoplasm"/>
    <property type="evidence" value="ECO:0007669"/>
    <property type="project" value="UniProtKB-SubCell"/>
</dbReference>
<dbReference type="GO" id="GO:0005524">
    <property type="term" value="F:ATP binding"/>
    <property type="evidence" value="ECO:0007669"/>
    <property type="project" value="UniProtKB-UniRule"/>
</dbReference>
<dbReference type="GO" id="GO:0004594">
    <property type="term" value="F:pantothenate kinase activity"/>
    <property type="evidence" value="ECO:0007669"/>
    <property type="project" value="UniProtKB-UniRule"/>
</dbReference>
<dbReference type="GO" id="GO:0015937">
    <property type="term" value="P:coenzyme A biosynthetic process"/>
    <property type="evidence" value="ECO:0007669"/>
    <property type="project" value="UniProtKB-UniRule"/>
</dbReference>
<dbReference type="CDD" id="cd02025">
    <property type="entry name" value="PanK"/>
    <property type="match status" value="1"/>
</dbReference>
<dbReference type="FunFam" id="3.40.50.300:FF:000242">
    <property type="entry name" value="Pantothenate kinase"/>
    <property type="match status" value="1"/>
</dbReference>
<dbReference type="Gene3D" id="3.40.50.300">
    <property type="entry name" value="P-loop containing nucleotide triphosphate hydrolases"/>
    <property type="match status" value="1"/>
</dbReference>
<dbReference type="HAMAP" id="MF_00215">
    <property type="entry name" value="Pantothen_kinase_1"/>
    <property type="match status" value="1"/>
</dbReference>
<dbReference type="InterPro" id="IPR027417">
    <property type="entry name" value="P-loop_NTPase"/>
</dbReference>
<dbReference type="InterPro" id="IPR004566">
    <property type="entry name" value="PanK"/>
</dbReference>
<dbReference type="InterPro" id="IPR006083">
    <property type="entry name" value="PRK/URK"/>
</dbReference>
<dbReference type="NCBIfam" id="TIGR00554">
    <property type="entry name" value="panK_bact"/>
    <property type="match status" value="1"/>
</dbReference>
<dbReference type="PANTHER" id="PTHR10285">
    <property type="entry name" value="URIDINE KINASE"/>
    <property type="match status" value="1"/>
</dbReference>
<dbReference type="Pfam" id="PF00485">
    <property type="entry name" value="PRK"/>
    <property type="match status" value="1"/>
</dbReference>
<dbReference type="PIRSF" id="PIRSF000545">
    <property type="entry name" value="Pantothenate_kin"/>
    <property type="match status" value="1"/>
</dbReference>
<dbReference type="SUPFAM" id="SSF52540">
    <property type="entry name" value="P-loop containing nucleoside triphosphate hydrolases"/>
    <property type="match status" value="1"/>
</dbReference>
<keyword id="KW-0067">ATP-binding</keyword>
<keyword id="KW-0173">Coenzyme A biosynthesis</keyword>
<keyword id="KW-0963">Cytoplasm</keyword>
<keyword id="KW-0418">Kinase</keyword>
<keyword id="KW-0547">Nucleotide-binding</keyword>
<keyword id="KW-0808">Transferase</keyword>
<reference key="1">
    <citation type="journal article" date="2008" name="J. Bacteriol.">
        <title>The pangenome structure of Escherichia coli: comparative genomic analysis of E. coli commensal and pathogenic isolates.</title>
        <authorList>
            <person name="Rasko D.A."/>
            <person name="Rosovitz M.J."/>
            <person name="Myers G.S.A."/>
            <person name="Mongodin E.F."/>
            <person name="Fricke W.F."/>
            <person name="Gajer P."/>
            <person name="Crabtree J."/>
            <person name="Sebaihia M."/>
            <person name="Thomson N.R."/>
            <person name="Chaudhuri R."/>
            <person name="Henderson I.R."/>
            <person name="Sperandio V."/>
            <person name="Ravel J."/>
        </authorList>
    </citation>
    <scope>NUCLEOTIDE SEQUENCE [LARGE SCALE GENOMIC DNA]</scope>
    <source>
        <strain>HS</strain>
    </source>
</reference>
<accession>A8A778</accession>
<proteinExistence type="inferred from homology"/>
<comment type="catalytic activity">
    <reaction evidence="1">
        <text>(R)-pantothenate + ATP = (R)-4'-phosphopantothenate + ADP + H(+)</text>
        <dbReference type="Rhea" id="RHEA:16373"/>
        <dbReference type="ChEBI" id="CHEBI:10986"/>
        <dbReference type="ChEBI" id="CHEBI:15378"/>
        <dbReference type="ChEBI" id="CHEBI:29032"/>
        <dbReference type="ChEBI" id="CHEBI:30616"/>
        <dbReference type="ChEBI" id="CHEBI:456216"/>
        <dbReference type="EC" id="2.7.1.33"/>
    </reaction>
</comment>
<comment type="pathway">
    <text evidence="1">Cofactor biosynthesis; coenzyme A biosynthesis; CoA from (R)-pantothenate: step 1/5.</text>
</comment>
<comment type="subcellular location">
    <subcellularLocation>
        <location evidence="1">Cytoplasm</location>
    </subcellularLocation>
</comment>
<comment type="similarity">
    <text evidence="1">Belongs to the prokaryotic pantothenate kinase family.</text>
</comment>
<sequence>MSIKEQTLMTPYLQFDRNQWAALRDSVPMTLSEDEIARLKGINEDLSLEEVAEIYLPLSRLLNFYISSNLRRQAVLEQFLGTNGQRIPYIISIAGSVAVGKSTTARVLQALLSRWPEHRRVELITTDGFLHPNQVLKERGLMKKKGFPESYDMHRLVKFVSDLKSGVPNVTAPVYSHLIYDVIPDGDKTVVQPDILILEGLNVLQSGMDYPHDPHHVFVSDFVDFSIYVDAPEDLLQTWYINRFLKFREGAFTDPDSYFHNYAKLTKEEAIKTAMTLWKEINWLNLKQNILPTRERASLILTKSANHAVEEVRLRK</sequence>
<organism>
    <name type="scientific">Escherichia coli O9:H4 (strain HS)</name>
    <dbReference type="NCBI Taxonomy" id="331112"/>
    <lineage>
        <taxon>Bacteria</taxon>
        <taxon>Pseudomonadati</taxon>
        <taxon>Pseudomonadota</taxon>
        <taxon>Gammaproteobacteria</taxon>
        <taxon>Enterobacterales</taxon>
        <taxon>Enterobacteriaceae</taxon>
        <taxon>Escherichia</taxon>
    </lineage>
</organism>
<protein>
    <recommendedName>
        <fullName evidence="1">Pantothenate kinase</fullName>
        <ecNumber evidence="1">2.7.1.33</ecNumber>
    </recommendedName>
    <alternativeName>
        <fullName evidence="1">Pantothenic acid kinase</fullName>
    </alternativeName>
</protein>
<evidence type="ECO:0000255" key="1">
    <source>
        <dbReference type="HAMAP-Rule" id="MF_00215"/>
    </source>
</evidence>
<name>COAA_ECOHS</name>